<keyword id="KW-0002">3D-structure</keyword>
<keyword id="KW-0472">Membrane</keyword>
<keyword id="KW-0602">Photosynthesis</keyword>
<keyword id="KW-0604">Photosystem II</keyword>
<keyword id="KW-0793">Thylakoid</keyword>
<keyword id="KW-0812">Transmembrane</keyword>
<keyword id="KW-1133">Transmembrane helix</keyword>
<name>PSB30_THEVL</name>
<organism>
    <name type="scientific">Thermostichus vulcanus</name>
    <name type="common">Synechococcus vulcanus</name>
    <dbReference type="NCBI Taxonomy" id="32053"/>
    <lineage>
        <taxon>Bacteria</taxon>
        <taxon>Bacillati</taxon>
        <taxon>Cyanobacteriota</taxon>
        <taxon>Cyanophyceae</taxon>
        <taxon>Thermostichales</taxon>
        <taxon>Thermostichaceae</taxon>
        <taxon>Thermostichus</taxon>
    </lineage>
</organism>
<gene>
    <name evidence="1" type="primary">psb30</name>
    <name type="synonym">psbY</name>
    <name type="synonym">ycf12</name>
</gene>
<feature type="chain" id="PRO_0000422607" description="Photosystem II reaction center protein Psb30">
    <location>
        <begin position="1" status="less than"/>
        <end position="30"/>
    </location>
</feature>
<feature type="topological domain" description="Lumenal" evidence="3">
    <location>
        <begin position="1"/>
        <end position="6"/>
    </location>
</feature>
<feature type="transmembrane region" description="Helical" evidence="3">
    <location>
        <begin position="7"/>
        <end position="21"/>
    </location>
</feature>
<feature type="topological domain" description="Cytoplasmic" evidence="3">
    <location>
        <begin position="22"/>
        <end position="30"/>
    </location>
</feature>
<feature type="non-terminal residue">
    <location>
        <position position="1"/>
    </location>
</feature>
<feature type="helix" evidence="6">
    <location>
        <begin position="3"/>
        <end position="25"/>
    </location>
</feature>
<protein>
    <recommendedName>
        <fullName evidence="1">Photosystem II reaction center protein Psb30</fullName>
    </recommendedName>
    <alternativeName>
        <fullName>Photosystem II reaction center protein Ycf12</fullName>
    </alternativeName>
</protein>
<reference key="1">
    <citation type="journal article" date="2009" name="Proc. Natl. Acad. Sci. U.S.A.">
        <title>Location of chloride and its possible functions in oxygen-evolving photosystem II revealed by X-ray crystallography.</title>
        <authorList>
            <person name="Kawakami K."/>
            <person name="Umena Y."/>
            <person name="Kamiya N."/>
            <person name="Shen J.R."/>
        </authorList>
    </citation>
    <scope>X-RAY CRYSTALLOGRAPHY (3.70 ANGSTROMS) OF 3-29 IN PHOTOSYSTEM II</scope>
    <scope>FUNCTION</scope>
    <scope>COFACTOR</scope>
    <scope>SUBUNIT</scope>
    <scope>SUBCELLULAR LOCATION</scope>
</reference>
<reference key="2">
    <citation type="journal article" date="2011" name="Nature">
        <title>Crystal structure of oxygen-evolving photosystem II at a resolution of 1.9 A.</title>
        <authorList>
            <person name="Umena Y."/>
            <person name="Kawakami K."/>
            <person name="Shen J.R."/>
            <person name="Kamiya N."/>
        </authorList>
    </citation>
    <scope>X-RAY CRYSTALLOGRAPHY (1.90 ANGSTROMS) IN PHOTOSYSTEM II</scope>
    <scope>COFACTOR</scope>
    <scope>SUBUNIT</scope>
    <scope>SUBCELLULAR LOCATION</scope>
    <scope>TOPOLOGY</scope>
</reference>
<reference key="3">
    <citation type="journal article" date="2013" name="Proc. Natl. Acad. Sci. U.S.A.">
        <title>Structure of Sr-substituted photosystem II at 2.1 A resolution and its implications in the mechanism of water oxidation.</title>
        <authorList>
            <person name="Koua F.H."/>
            <person name="Umena Y."/>
            <person name="Kawakami K."/>
            <person name="Shen J.R."/>
        </authorList>
    </citation>
    <scope>X-RAY CRYSTALLOGRAPHY (2.1 ANGSTROMS) IN PHOTOSYSTEM II</scope>
    <scope>FUNCTION</scope>
    <scope>COFACTOR</scope>
    <scope>SUBUNIT</scope>
    <scope>SUBCELLULAR LOCATION</scope>
</reference>
<dbReference type="PDB" id="3A0B">
    <property type="method" value="X-ray"/>
    <property type="resolution" value="3.70 A"/>
    <property type="chains" value="Y/y=3-30"/>
</dbReference>
<dbReference type="PDB" id="3A0H">
    <property type="method" value="X-ray"/>
    <property type="resolution" value="4.00 A"/>
    <property type="chains" value="Y/y=3-30"/>
</dbReference>
<dbReference type="PDB" id="3WU2">
    <property type="method" value="X-ray"/>
    <property type="resolution" value="1.90 A"/>
    <property type="chains" value="Y/y=1-30"/>
</dbReference>
<dbReference type="PDB" id="4IL6">
    <property type="method" value="X-ray"/>
    <property type="resolution" value="2.10 A"/>
    <property type="chains" value="Y/y=1-30"/>
</dbReference>
<dbReference type="PDB" id="4UB6">
    <property type="method" value="X-ray"/>
    <property type="resolution" value="1.95 A"/>
    <property type="chains" value="Y/y=1-30"/>
</dbReference>
<dbReference type="PDB" id="4UB8">
    <property type="method" value="X-ray"/>
    <property type="resolution" value="1.95 A"/>
    <property type="chains" value="Y/y=1-30"/>
</dbReference>
<dbReference type="PDB" id="5B5E">
    <property type="method" value="X-ray"/>
    <property type="resolution" value="1.87 A"/>
    <property type="chains" value="Y/y=1-30"/>
</dbReference>
<dbReference type="PDB" id="5B66">
    <property type="method" value="X-ray"/>
    <property type="resolution" value="1.85 A"/>
    <property type="chains" value="Y/y=1-30"/>
</dbReference>
<dbReference type="PDB" id="5GTH">
    <property type="method" value="X-ray"/>
    <property type="resolution" value="2.50 A"/>
    <property type="chains" value="Y/y=1-30"/>
</dbReference>
<dbReference type="PDB" id="5GTI">
    <property type="method" value="X-ray"/>
    <property type="resolution" value="2.50 A"/>
    <property type="chains" value="Y/y=1-30"/>
</dbReference>
<dbReference type="PDB" id="5V2C">
    <property type="method" value="X-ray"/>
    <property type="resolution" value="1.90 A"/>
    <property type="chains" value="Y/y=1-30"/>
</dbReference>
<dbReference type="PDB" id="5WS5">
    <property type="method" value="X-ray"/>
    <property type="resolution" value="2.35 A"/>
    <property type="chains" value="Y/y=1-30"/>
</dbReference>
<dbReference type="PDB" id="5WS6">
    <property type="method" value="X-ray"/>
    <property type="resolution" value="2.35 A"/>
    <property type="chains" value="Y/y=1-30"/>
</dbReference>
<dbReference type="PDB" id="6JLJ">
    <property type="method" value="X-ray"/>
    <property type="resolution" value="2.15 A"/>
    <property type="chains" value="Y/y=1-30"/>
</dbReference>
<dbReference type="PDB" id="6JLK">
    <property type="method" value="X-ray"/>
    <property type="resolution" value="2.15 A"/>
    <property type="chains" value="Y/y=1-30"/>
</dbReference>
<dbReference type="PDB" id="6JLL">
    <property type="method" value="X-ray"/>
    <property type="resolution" value="2.15 A"/>
    <property type="chains" value="Y/y=1-30"/>
</dbReference>
<dbReference type="PDB" id="6JLM">
    <property type="method" value="X-ray"/>
    <property type="resolution" value="2.35 A"/>
    <property type="chains" value="Y/y=1-30"/>
</dbReference>
<dbReference type="PDB" id="6JLN">
    <property type="method" value="X-ray"/>
    <property type="resolution" value="2.40 A"/>
    <property type="chains" value="Y/y=1-30"/>
</dbReference>
<dbReference type="PDB" id="6JLO">
    <property type="method" value="X-ray"/>
    <property type="resolution" value="2.40 A"/>
    <property type="chains" value="Y/y=1-30"/>
</dbReference>
<dbReference type="PDB" id="6JLP">
    <property type="method" value="X-ray"/>
    <property type="resolution" value="2.50 A"/>
    <property type="chains" value="Y/y=1-30"/>
</dbReference>
<dbReference type="PDB" id="7CJI">
    <property type="method" value="X-ray"/>
    <property type="resolution" value="2.35 A"/>
    <property type="chains" value="Y/y=1-30"/>
</dbReference>
<dbReference type="PDB" id="7CJJ">
    <property type="method" value="X-ray"/>
    <property type="resolution" value="2.40 A"/>
    <property type="chains" value="Y/y=1-30"/>
</dbReference>
<dbReference type="PDB" id="7COU">
    <property type="method" value="X-ray"/>
    <property type="resolution" value="2.25 A"/>
    <property type="chains" value="Y/y=1-30"/>
</dbReference>
<dbReference type="PDB" id="7CZL">
    <property type="method" value="EM"/>
    <property type="resolution" value="3.78 A"/>
    <property type="chains" value="Y/y=1-30"/>
</dbReference>
<dbReference type="PDB" id="7D1T">
    <property type="method" value="EM"/>
    <property type="resolution" value="1.95 A"/>
    <property type="chains" value="Y/y=1-30"/>
</dbReference>
<dbReference type="PDB" id="7D1U">
    <property type="method" value="EM"/>
    <property type="resolution" value="2.08 A"/>
    <property type="chains" value="Y/y=1-30"/>
</dbReference>
<dbReference type="PDB" id="7DXH">
    <property type="method" value="EM"/>
    <property type="resolution" value="3.14 A"/>
    <property type="chains" value="y=1-30"/>
</dbReference>
<dbReference type="PDB" id="7EDA">
    <property type="method" value="EM"/>
    <property type="resolution" value="2.78 A"/>
    <property type="chains" value="Y=1-30"/>
</dbReference>
<dbReference type="PDB" id="8GN0">
    <property type="method" value="X-ray"/>
    <property type="resolution" value="2.15 A"/>
    <property type="chains" value="Y/y=1-30"/>
</dbReference>
<dbReference type="PDB" id="8GN1">
    <property type="method" value="X-ray"/>
    <property type="resolution" value="2.10 A"/>
    <property type="chains" value="Y/y=1-30"/>
</dbReference>
<dbReference type="PDB" id="8GN2">
    <property type="method" value="X-ray"/>
    <property type="resolution" value="1.95 A"/>
    <property type="chains" value="Y/y=1-30"/>
</dbReference>
<dbReference type="PDB" id="8IR5">
    <property type="method" value="X-ray"/>
    <property type="resolution" value="2.15 A"/>
    <property type="chains" value="Y/y=1-30"/>
</dbReference>
<dbReference type="PDB" id="8IR6">
    <property type="method" value="X-ray"/>
    <property type="resolution" value="2.20 A"/>
    <property type="chains" value="Y/y=1-30"/>
</dbReference>
<dbReference type="PDB" id="8IR7">
    <property type="method" value="X-ray"/>
    <property type="resolution" value="2.25 A"/>
    <property type="chains" value="Y/y=1-30"/>
</dbReference>
<dbReference type="PDB" id="8IR8">
    <property type="method" value="X-ray"/>
    <property type="resolution" value="2.25 A"/>
    <property type="chains" value="Y/y=1-30"/>
</dbReference>
<dbReference type="PDB" id="8IR9">
    <property type="method" value="X-ray"/>
    <property type="resolution" value="2.20 A"/>
    <property type="chains" value="Y/y=1-30"/>
</dbReference>
<dbReference type="PDB" id="8IRA">
    <property type="method" value="X-ray"/>
    <property type="resolution" value="2.20 A"/>
    <property type="chains" value="Y/y=1-30"/>
</dbReference>
<dbReference type="PDB" id="8IRB">
    <property type="method" value="X-ray"/>
    <property type="resolution" value="2.30 A"/>
    <property type="chains" value="Y/y=1-30"/>
</dbReference>
<dbReference type="PDB" id="8IRC">
    <property type="method" value="X-ray"/>
    <property type="resolution" value="2.25 A"/>
    <property type="chains" value="Y/y=1-30"/>
</dbReference>
<dbReference type="PDB" id="8IRD">
    <property type="method" value="X-ray"/>
    <property type="resolution" value="2.30 A"/>
    <property type="chains" value="Y/y=1-30"/>
</dbReference>
<dbReference type="PDB" id="8IRE">
    <property type="method" value="X-ray"/>
    <property type="resolution" value="2.25 A"/>
    <property type="chains" value="Y/y=1-30"/>
</dbReference>
<dbReference type="PDB" id="8IRF">
    <property type="method" value="X-ray"/>
    <property type="resolution" value="2.25 A"/>
    <property type="chains" value="Y/y=1-30"/>
</dbReference>
<dbReference type="PDB" id="8IRG">
    <property type="method" value="X-ray"/>
    <property type="resolution" value="2.30 A"/>
    <property type="chains" value="Y/y=1-30"/>
</dbReference>
<dbReference type="PDB" id="8IRH">
    <property type="method" value="X-ray"/>
    <property type="resolution" value="2.25 A"/>
    <property type="chains" value="Y/y=1-30"/>
</dbReference>
<dbReference type="PDB" id="8IRI">
    <property type="method" value="X-ray"/>
    <property type="resolution" value="2.25 A"/>
    <property type="chains" value="Y/y=1-30"/>
</dbReference>
<dbReference type="PDBsum" id="3A0B"/>
<dbReference type="PDBsum" id="3A0H"/>
<dbReference type="PDBsum" id="3WU2"/>
<dbReference type="PDBsum" id="4IL6"/>
<dbReference type="PDBsum" id="4UB6"/>
<dbReference type="PDBsum" id="4UB8"/>
<dbReference type="PDBsum" id="5B5E"/>
<dbReference type="PDBsum" id="5B66"/>
<dbReference type="PDBsum" id="5GTH"/>
<dbReference type="PDBsum" id="5GTI"/>
<dbReference type="PDBsum" id="5V2C"/>
<dbReference type="PDBsum" id="5WS5"/>
<dbReference type="PDBsum" id="5WS6"/>
<dbReference type="PDBsum" id="6JLJ"/>
<dbReference type="PDBsum" id="6JLK"/>
<dbReference type="PDBsum" id="6JLL"/>
<dbReference type="PDBsum" id="6JLM"/>
<dbReference type="PDBsum" id="6JLN"/>
<dbReference type="PDBsum" id="6JLO"/>
<dbReference type="PDBsum" id="6JLP"/>
<dbReference type="PDBsum" id="7CJI"/>
<dbReference type="PDBsum" id="7CJJ"/>
<dbReference type="PDBsum" id="7COU"/>
<dbReference type="PDBsum" id="7CZL"/>
<dbReference type="PDBsum" id="7D1T"/>
<dbReference type="PDBsum" id="7D1U"/>
<dbReference type="PDBsum" id="7DXH"/>
<dbReference type="PDBsum" id="7EDA"/>
<dbReference type="PDBsum" id="8GN0"/>
<dbReference type="PDBsum" id="8GN1"/>
<dbReference type="PDBsum" id="8GN2"/>
<dbReference type="PDBsum" id="8IR5"/>
<dbReference type="PDBsum" id="8IR6"/>
<dbReference type="PDBsum" id="8IR7"/>
<dbReference type="PDBsum" id="8IR8"/>
<dbReference type="PDBsum" id="8IR9"/>
<dbReference type="PDBsum" id="8IRA"/>
<dbReference type="PDBsum" id="8IRB"/>
<dbReference type="PDBsum" id="8IRC"/>
<dbReference type="PDBsum" id="8IRD"/>
<dbReference type="PDBsum" id="8IRE"/>
<dbReference type="PDBsum" id="8IRF"/>
<dbReference type="PDBsum" id="8IRG"/>
<dbReference type="PDBsum" id="8IRH"/>
<dbReference type="PDBsum" id="8IRI"/>
<dbReference type="EMDB" id="EMD-30511"/>
<dbReference type="EMDB" id="EMD-30547"/>
<dbReference type="EMDB" id="EMD-30548"/>
<dbReference type="EMDB" id="EMD-30909"/>
<dbReference type="EMDB" id="EMD-31062"/>
<dbReference type="SMR" id="D0VWR3"/>
<dbReference type="DIP" id="DIP-61470N"/>
<dbReference type="IntAct" id="D0VWR3">
    <property type="interactions" value="1"/>
</dbReference>
<dbReference type="GO" id="GO:0009523">
    <property type="term" value="C:photosystem II"/>
    <property type="evidence" value="ECO:0007669"/>
    <property type="project" value="UniProtKB-KW"/>
</dbReference>
<dbReference type="GO" id="GO:0031676">
    <property type="term" value="C:plasma membrane-derived thylakoid membrane"/>
    <property type="evidence" value="ECO:0007669"/>
    <property type="project" value="UniProtKB-SubCell"/>
</dbReference>
<dbReference type="GO" id="GO:0015979">
    <property type="term" value="P:photosynthesis"/>
    <property type="evidence" value="ECO:0007669"/>
    <property type="project" value="UniProtKB-KW"/>
</dbReference>
<dbReference type="InterPro" id="IPR010284">
    <property type="entry name" value="PSII_Ycf12_core-subunit"/>
</dbReference>
<dbReference type="NCBIfam" id="NF010239">
    <property type="entry name" value="PRK13686.1"/>
    <property type="match status" value="1"/>
</dbReference>
<dbReference type="Pfam" id="PF05969">
    <property type="entry name" value="PSII_Ycf12"/>
    <property type="match status" value="1"/>
</dbReference>
<proteinExistence type="evidence at protein level"/>
<sequence length="30" mass="3226">EVIAQLTMIAMIGIAGPMIIFLLAVRRGNL</sequence>
<comment type="function">
    <text evidence="2 4">A core subunit of photosystem II (PSII), probably helps stabilize the reaction center. PSII is a light-driven water plastoquinone oxidoreductase, using light energy to abstract electrons from H(2)O, generating a proton gradient subsequently used for ATP formation.</text>
</comment>
<comment type="cofactor">
    <text evidence="2 3 4">PSII binds multiple chlorophylls, carotenoids and specific lipids.</text>
</comment>
<comment type="subunit">
    <text evidence="2 3 4">PSII is composed of 1 copy each of membrane proteins PsbA, PsbB, PsbC, PsbD, PsbE, PsbF, PsbH, PsbI, PsbJ, PsbK, PsbL, PsbM, PsbT, PsbX, PsbY, PsbZ, Psb30/Ycf12, peripheral proteins PsbO, CyanoQ (PsbQ), PsbU, PsbV and a large number of cofactors. It forms dimeric complexes.</text>
</comment>
<comment type="subcellular location">
    <subcellularLocation>
        <location evidence="2 3 4">Cellular thylakoid membrane</location>
        <topology evidence="2 3 4">Single-pass membrane protein</topology>
    </subcellularLocation>
</comment>
<comment type="similarity">
    <text evidence="5">Belongs to the Psb30/Ycf12 family.</text>
</comment>
<accession>D0VWR3</accession>
<evidence type="ECO:0000250" key="1">
    <source>
        <dbReference type="UniProtKB" id="Q8DJI1"/>
    </source>
</evidence>
<evidence type="ECO:0000269" key="2">
    <source>
    </source>
</evidence>
<evidence type="ECO:0000269" key="3">
    <source>
    </source>
</evidence>
<evidence type="ECO:0000269" key="4">
    <source>
    </source>
</evidence>
<evidence type="ECO:0000305" key="5"/>
<evidence type="ECO:0007829" key="6">
    <source>
        <dbReference type="PDB" id="5B66"/>
    </source>
</evidence>